<proteinExistence type="inferred from homology"/>
<reference key="1">
    <citation type="journal article" date="2009" name="Appl. Environ. Microbiol.">
        <title>Novel features of the polysaccharide-digesting gliding bacterium Flavobacterium johnsoniae as revealed by genome sequence analysis.</title>
        <authorList>
            <person name="McBride M.J."/>
            <person name="Xie G."/>
            <person name="Martens E.C."/>
            <person name="Lapidus A."/>
            <person name="Henrissat B."/>
            <person name="Rhodes R.G."/>
            <person name="Goltsman E."/>
            <person name="Wang W."/>
            <person name="Xu J."/>
            <person name="Hunnicutt D.W."/>
            <person name="Staroscik A.M."/>
            <person name="Hoover T.R."/>
            <person name="Cheng Y.Q."/>
            <person name="Stein J.L."/>
        </authorList>
    </citation>
    <scope>NUCLEOTIDE SEQUENCE [LARGE SCALE GENOMIC DNA]</scope>
    <source>
        <strain>ATCC 17061 / DSM 2064 / JCM 8514 / BCRC 14874 / CCUG 350202 / NBRC 14942 / NCIMB 11054 / UW101</strain>
    </source>
</reference>
<comment type="function">
    <text evidence="1">This enzyme is involved in nucleotide metabolism: it produces dUMP, the immediate precursor of thymidine nucleotides and it decreases the intracellular concentration of dUTP so that uracil cannot be incorporated into DNA.</text>
</comment>
<comment type="catalytic activity">
    <reaction evidence="1">
        <text>dUTP + H2O = dUMP + diphosphate + H(+)</text>
        <dbReference type="Rhea" id="RHEA:10248"/>
        <dbReference type="ChEBI" id="CHEBI:15377"/>
        <dbReference type="ChEBI" id="CHEBI:15378"/>
        <dbReference type="ChEBI" id="CHEBI:33019"/>
        <dbReference type="ChEBI" id="CHEBI:61555"/>
        <dbReference type="ChEBI" id="CHEBI:246422"/>
        <dbReference type="EC" id="3.6.1.23"/>
    </reaction>
</comment>
<comment type="cofactor">
    <cofactor evidence="1">
        <name>Mg(2+)</name>
        <dbReference type="ChEBI" id="CHEBI:18420"/>
    </cofactor>
</comment>
<comment type="pathway">
    <text evidence="1">Pyrimidine metabolism; dUMP biosynthesis; dUMP from dCTP (dUTP route): step 2/2.</text>
</comment>
<comment type="similarity">
    <text evidence="1">Belongs to the dUTPase family.</text>
</comment>
<protein>
    <recommendedName>
        <fullName evidence="1">Deoxyuridine 5'-triphosphate nucleotidohydrolase</fullName>
        <shortName evidence="1">dUTPase</shortName>
        <ecNumber evidence="1">3.6.1.23</ecNumber>
    </recommendedName>
    <alternativeName>
        <fullName evidence="1">dUTP pyrophosphatase</fullName>
    </alternativeName>
</protein>
<feature type="chain" id="PRO_1000076058" description="Deoxyuridine 5'-triphosphate nucleotidohydrolase">
    <location>
        <begin position="1"/>
        <end position="144"/>
    </location>
</feature>
<feature type="binding site" evidence="1">
    <location>
        <begin position="63"/>
        <end position="65"/>
    </location>
    <ligand>
        <name>substrate</name>
    </ligand>
</feature>
<feature type="binding site" evidence="1">
    <location>
        <position position="76"/>
    </location>
    <ligand>
        <name>substrate</name>
    </ligand>
</feature>
<feature type="binding site" evidence="1">
    <location>
        <begin position="80"/>
        <end position="82"/>
    </location>
    <ligand>
        <name>substrate</name>
    </ligand>
</feature>
<keyword id="KW-0378">Hydrolase</keyword>
<keyword id="KW-0460">Magnesium</keyword>
<keyword id="KW-0479">Metal-binding</keyword>
<keyword id="KW-0546">Nucleotide metabolism</keyword>
<accession>A5FL22</accession>
<organism>
    <name type="scientific">Flavobacterium johnsoniae (strain ATCC 17061 / DSM 2064 / JCM 8514 / BCRC 14874 / CCUG 350202 / NBRC 14942 / NCIMB 11054 / UW101)</name>
    <name type="common">Cytophaga johnsonae</name>
    <dbReference type="NCBI Taxonomy" id="376686"/>
    <lineage>
        <taxon>Bacteria</taxon>
        <taxon>Pseudomonadati</taxon>
        <taxon>Bacteroidota</taxon>
        <taxon>Flavobacteriia</taxon>
        <taxon>Flavobacteriales</taxon>
        <taxon>Flavobacteriaceae</taxon>
        <taxon>Flavobacterium</taxon>
    </lineage>
</organism>
<gene>
    <name evidence="1" type="primary">dut</name>
    <name type="ordered locus">Fjoh_1063</name>
</gene>
<sequence length="144" mass="15812">MKIQIINKSRHDLPNYETIASAGMDLRANIIEPITLKPLERTIVKTGLFIELPIGYEAQVRPRSGLAAKKGVTVLNSPGTVDADYRGEIGVILVNLSNEEFVIENGERIAQLIIAKHERAEWIEVEELSETSRGEGGFGSTGVK</sequence>
<dbReference type="EC" id="3.6.1.23" evidence="1"/>
<dbReference type="EMBL" id="CP000685">
    <property type="protein sequence ID" value="ABQ04096.1"/>
    <property type="molecule type" value="Genomic_DNA"/>
</dbReference>
<dbReference type="RefSeq" id="WP_012023148.1">
    <property type="nucleotide sequence ID" value="NC_009441.1"/>
</dbReference>
<dbReference type="SMR" id="A5FL22"/>
<dbReference type="STRING" id="376686.Fjoh_1063"/>
<dbReference type="KEGG" id="fjo:Fjoh_1063"/>
<dbReference type="eggNOG" id="COG0756">
    <property type="taxonomic scope" value="Bacteria"/>
</dbReference>
<dbReference type="HOGENOM" id="CLU_068508_1_2_10"/>
<dbReference type="OrthoDB" id="9809956at2"/>
<dbReference type="UniPathway" id="UPA00610">
    <property type="reaction ID" value="UER00666"/>
</dbReference>
<dbReference type="Proteomes" id="UP000006694">
    <property type="component" value="Chromosome"/>
</dbReference>
<dbReference type="GO" id="GO:0004170">
    <property type="term" value="F:dUTP diphosphatase activity"/>
    <property type="evidence" value="ECO:0007669"/>
    <property type="project" value="UniProtKB-UniRule"/>
</dbReference>
<dbReference type="GO" id="GO:0000287">
    <property type="term" value="F:magnesium ion binding"/>
    <property type="evidence" value="ECO:0007669"/>
    <property type="project" value="UniProtKB-UniRule"/>
</dbReference>
<dbReference type="GO" id="GO:0006226">
    <property type="term" value="P:dUMP biosynthetic process"/>
    <property type="evidence" value="ECO:0007669"/>
    <property type="project" value="UniProtKB-UniRule"/>
</dbReference>
<dbReference type="GO" id="GO:0046081">
    <property type="term" value="P:dUTP catabolic process"/>
    <property type="evidence" value="ECO:0007669"/>
    <property type="project" value="InterPro"/>
</dbReference>
<dbReference type="CDD" id="cd07557">
    <property type="entry name" value="trimeric_dUTPase"/>
    <property type="match status" value="1"/>
</dbReference>
<dbReference type="FunFam" id="2.70.40.10:FF:000002">
    <property type="entry name" value="dUTP diphosphatase"/>
    <property type="match status" value="1"/>
</dbReference>
<dbReference type="Gene3D" id="2.70.40.10">
    <property type="match status" value="1"/>
</dbReference>
<dbReference type="HAMAP" id="MF_00116">
    <property type="entry name" value="dUTPase_bact"/>
    <property type="match status" value="1"/>
</dbReference>
<dbReference type="InterPro" id="IPR008181">
    <property type="entry name" value="dUTPase"/>
</dbReference>
<dbReference type="InterPro" id="IPR029054">
    <property type="entry name" value="dUTPase-like"/>
</dbReference>
<dbReference type="InterPro" id="IPR036157">
    <property type="entry name" value="dUTPase-like_sf"/>
</dbReference>
<dbReference type="InterPro" id="IPR033704">
    <property type="entry name" value="dUTPase_trimeric"/>
</dbReference>
<dbReference type="NCBIfam" id="TIGR00576">
    <property type="entry name" value="dut"/>
    <property type="match status" value="1"/>
</dbReference>
<dbReference type="NCBIfam" id="NF001862">
    <property type="entry name" value="PRK00601.1"/>
    <property type="match status" value="1"/>
</dbReference>
<dbReference type="PANTHER" id="PTHR11241">
    <property type="entry name" value="DEOXYURIDINE 5'-TRIPHOSPHATE NUCLEOTIDOHYDROLASE"/>
    <property type="match status" value="1"/>
</dbReference>
<dbReference type="PANTHER" id="PTHR11241:SF0">
    <property type="entry name" value="DEOXYURIDINE 5'-TRIPHOSPHATE NUCLEOTIDOHYDROLASE"/>
    <property type="match status" value="1"/>
</dbReference>
<dbReference type="Pfam" id="PF00692">
    <property type="entry name" value="dUTPase"/>
    <property type="match status" value="1"/>
</dbReference>
<dbReference type="SUPFAM" id="SSF51283">
    <property type="entry name" value="dUTPase-like"/>
    <property type="match status" value="1"/>
</dbReference>
<evidence type="ECO:0000255" key="1">
    <source>
        <dbReference type="HAMAP-Rule" id="MF_00116"/>
    </source>
</evidence>
<name>DUT_FLAJ1</name>